<proteinExistence type="inferred from homology"/>
<feature type="chain" id="PRO_1000186145" description="Regulatory protein ViaA">
    <location>
        <begin position="1"/>
        <end position="483"/>
    </location>
</feature>
<reference key="1">
    <citation type="journal article" date="2009" name="PLoS Genet.">
        <title>Organised genome dynamics in the Escherichia coli species results in highly diverse adaptive paths.</title>
        <authorList>
            <person name="Touchon M."/>
            <person name="Hoede C."/>
            <person name="Tenaillon O."/>
            <person name="Barbe V."/>
            <person name="Baeriswyl S."/>
            <person name="Bidet P."/>
            <person name="Bingen E."/>
            <person name="Bonacorsi S."/>
            <person name="Bouchier C."/>
            <person name="Bouvet O."/>
            <person name="Calteau A."/>
            <person name="Chiapello H."/>
            <person name="Clermont O."/>
            <person name="Cruveiller S."/>
            <person name="Danchin A."/>
            <person name="Diard M."/>
            <person name="Dossat C."/>
            <person name="Karoui M.E."/>
            <person name="Frapy E."/>
            <person name="Garry L."/>
            <person name="Ghigo J.M."/>
            <person name="Gilles A.M."/>
            <person name="Johnson J."/>
            <person name="Le Bouguenec C."/>
            <person name="Lescat M."/>
            <person name="Mangenot S."/>
            <person name="Martinez-Jehanne V."/>
            <person name="Matic I."/>
            <person name="Nassif X."/>
            <person name="Oztas S."/>
            <person name="Petit M.A."/>
            <person name="Pichon C."/>
            <person name="Rouy Z."/>
            <person name="Ruf C.S."/>
            <person name="Schneider D."/>
            <person name="Tourret J."/>
            <person name="Vacherie B."/>
            <person name="Vallenet D."/>
            <person name="Medigue C."/>
            <person name="Rocha E.P.C."/>
            <person name="Denamur E."/>
        </authorList>
    </citation>
    <scope>NUCLEOTIDE SEQUENCE [LARGE SCALE GENOMIC DNA]</scope>
    <source>
        <strain>ED1a</strain>
    </source>
</reference>
<accession>B7N2I4</accession>
<evidence type="ECO:0000255" key="1">
    <source>
        <dbReference type="HAMAP-Rule" id="MF_01626"/>
    </source>
</evidence>
<keyword id="KW-0143">Chaperone</keyword>
<keyword id="KW-0963">Cytoplasm</keyword>
<comment type="function">
    <text evidence="1">Component of the RavA-ViaA chaperone complex, which may act on the membrane to optimize the function of some of the respiratory chains. ViaA stimulates the ATPase activity of RavA.</text>
</comment>
<comment type="subunit">
    <text evidence="1">Homodimer. Interacts with RavA.</text>
</comment>
<comment type="subcellular location">
    <subcellularLocation>
        <location evidence="1">Cytoplasm</location>
    </subcellularLocation>
</comment>
<comment type="similarity">
    <text evidence="1">Belongs to the ViaA family.</text>
</comment>
<dbReference type="EMBL" id="CU928162">
    <property type="protein sequence ID" value="CAR10555.2"/>
    <property type="molecule type" value="Genomic_DNA"/>
</dbReference>
<dbReference type="RefSeq" id="WP_000956650.1">
    <property type="nucleotide sequence ID" value="NC_011745.1"/>
</dbReference>
<dbReference type="SMR" id="B7N2I4"/>
<dbReference type="KEGG" id="ecq:ECED1_4435"/>
<dbReference type="HOGENOM" id="CLU_022130_0_0_6"/>
<dbReference type="Proteomes" id="UP000000748">
    <property type="component" value="Chromosome"/>
</dbReference>
<dbReference type="GO" id="GO:0005829">
    <property type="term" value="C:cytosol"/>
    <property type="evidence" value="ECO:0007669"/>
    <property type="project" value="TreeGrafter"/>
</dbReference>
<dbReference type="CDD" id="cd01462">
    <property type="entry name" value="VWA_YIEM_type"/>
    <property type="match status" value="1"/>
</dbReference>
<dbReference type="Gene3D" id="3.40.50.410">
    <property type="entry name" value="von Willebrand factor, type A domain"/>
    <property type="match status" value="1"/>
</dbReference>
<dbReference type="HAMAP" id="MF_01626">
    <property type="entry name" value="ViaA"/>
    <property type="match status" value="1"/>
</dbReference>
<dbReference type="InterPro" id="IPR008912">
    <property type="entry name" value="Uncharacterised_CoxE"/>
</dbReference>
<dbReference type="InterPro" id="IPR023481">
    <property type="entry name" value="Uncharacterised_ViaA"/>
</dbReference>
<dbReference type="InterPro" id="IPR002035">
    <property type="entry name" value="VWF_A"/>
</dbReference>
<dbReference type="InterPro" id="IPR036465">
    <property type="entry name" value="vWFA_dom_sf"/>
</dbReference>
<dbReference type="NCBIfam" id="NF008230">
    <property type="entry name" value="PRK10997.1"/>
    <property type="match status" value="1"/>
</dbReference>
<dbReference type="PANTHER" id="PTHR36846">
    <property type="entry name" value="PROTEIN VIAA"/>
    <property type="match status" value="1"/>
</dbReference>
<dbReference type="PANTHER" id="PTHR36846:SF1">
    <property type="entry name" value="PROTEIN VIAA"/>
    <property type="match status" value="1"/>
</dbReference>
<dbReference type="Pfam" id="PF05762">
    <property type="entry name" value="VWA_CoxE"/>
    <property type="match status" value="1"/>
</dbReference>
<dbReference type="SMART" id="SM00327">
    <property type="entry name" value="VWA"/>
    <property type="match status" value="1"/>
</dbReference>
<dbReference type="SUPFAM" id="SSF53300">
    <property type="entry name" value="vWA-like"/>
    <property type="match status" value="1"/>
</dbReference>
<name>VIAA_ECO81</name>
<organism>
    <name type="scientific">Escherichia coli O81 (strain ED1a)</name>
    <dbReference type="NCBI Taxonomy" id="585397"/>
    <lineage>
        <taxon>Bacteria</taxon>
        <taxon>Pseudomonadati</taxon>
        <taxon>Pseudomonadota</taxon>
        <taxon>Gammaproteobacteria</taxon>
        <taxon>Enterobacterales</taxon>
        <taxon>Enterobacteriaceae</taxon>
        <taxon>Escherichia</taxon>
    </lineage>
</organism>
<protein>
    <recommendedName>
        <fullName evidence="1">Regulatory protein ViaA</fullName>
    </recommendedName>
    <alternativeName>
        <fullName evidence="1">VWA interacting with AAA+ ATPase</fullName>
    </alternativeName>
</protein>
<sequence length="483" mass="55969">MLTLDTLNVMLAVSEEGLIEEMIIALLASPQLAVFFEKFPRLKAAITDDVPRWREALRSRLKDARVPPELTEEVMCYQQSQLLSTPQFIVQLPQILDLLHRLNSPWAEQARQLVDANSTITSALHTLFLQRWRLSLIVQATTLNQQLLEEEREQLLSEVQERMTLSGQLEPILADNNTAAGRLWDMSAGQLKRSDYQLIVKYGEFLNEQPELKRLAEQLGRSREAKSIPRNDAQMETFRTMVREPATVPEQVDGLQQSDDILRLLPPELATLGITELEYEFYRRLVEKQLLTYRLHGESWREKMIERPVVHKDYDEQPRGPFIVCVDTSGSMGGFNEQCAKAFCLALMRIALAENRRCYIMLFSTEIVRYELSGPQGIEQAIRFLSQQFRGGTDLASCFRAIMERLQSREWFDADAVVISDFIAQRLPDDVTSKVKELQRVHQHRFHAVAMSAHGKPGIMRIFDHIWRFDTGMRSRLLRRWRR</sequence>
<gene>
    <name evidence="1" type="primary">viaA</name>
    <name type="ordered locus">ECED1_4435</name>
</gene>